<proteinExistence type="inferred from homology"/>
<keyword id="KW-0678">Repressor</keyword>
<keyword id="KW-0346">Stress response</keyword>
<keyword id="KW-0804">Transcription</keyword>
<keyword id="KW-0805">Transcription regulation</keyword>
<dbReference type="EMBL" id="CP001101">
    <property type="protein sequence ID" value="ACE03803.1"/>
    <property type="molecule type" value="Genomic_DNA"/>
</dbReference>
<dbReference type="SMR" id="B3EPC5"/>
<dbReference type="STRING" id="331678.Cphamn1_0852"/>
<dbReference type="KEGG" id="cpb:Cphamn1_0852"/>
<dbReference type="eggNOG" id="COG1420">
    <property type="taxonomic scope" value="Bacteria"/>
</dbReference>
<dbReference type="HOGENOM" id="CLU_050019_1_0_10"/>
<dbReference type="OrthoDB" id="9783139at2"/>
<dbReference type="GO" id="GO:0003677">
    <property type="term" value="F:DNA binding"/>
    <property type="evidence" value="ECO:0007669"/>
    <property type="project" value="InterPro"/>
</dbReference>
<dbReference type="GO" id="GO:0045892">
    <property type="term" value="P:negative regulation of DNA-templated transcription"/>
    <property type="evidence" value="ECO:0007669"/>
    <property type="project" value="UniProtKB-UniRule"/>
</dbReference>
<dbReference type="Gene3D" id="3.30.450.40">
    <property type="match status" value="1"/>
</dbReference>
<dbReference type="Gene3D" id="3.30.390.60">
    <property type="entry name" value="Heat-inducible transcription repressor hrca homolog, domain 3"/>
    <property type="match status" value="1"/>
</dbReference>
<dbReference type="Gene3D" id="1.10.10.10">
    <property type="entry name" value="Winged helix-like DNA-binding domain superfamily/Winged helix DNA-binding domain"/>
    <property type="match status" value="1"/>
</dbReference>
<dbReference type="HAMAP" id="MF_00081">
    <property type="entry name" value="HrcA"/>
    <property type="match status" value="1"/>
</dbReference>
<dbReference type="InterPro" id="IPR029016">
    <property type="entry name" value="GAF-like_dom_sf"/>
</dbReference>
<dbReference type="InterPro" id="IPR002571">
    <property type="entry name" value="HrcA"/>
</dbReference>
<dbReference type="InterPro" id="IPR021153">
    <property type="entry name" value="HrcA_C"/>
</dbReference>
<dbReference type="InterPro" id="IPR036388">
    <property type="entry name" value="WH-like_DNA-bd_sf"/>
</dbReference>
<dbReference type="InterPro" id="IPR036390">
    <property type="entry name" value="WH_DNA-bd_sf"/>
</dbReference>
<dbReference type="InterPro" id="IPR023120">
    <property type="entry name" value="WHTH_transcript_rep_HrcA_IDD"/>
</dbReference>
<dbReference type="NCBIfam" id="TIGR00331">
    <property type="entry name" value="hrcA"/>
    <property type="match status" value="1"/>
</dbReference>
<dbReference type="PANTHER" id="PTHR34824">
    <property type="entry name" value="HEAT-INDUCIBLE TRANSCRIPTION REPRESSOR HRCA"/>
    <property type="match status" value="1"/>
</dbReference>
<dbReference type="PANTHER" id="PTHR34824:SF1">
    <property type="entry name" value="HEAT-INDUCIBLE TRANSCRIPTION REPRESSOR HRCA"/>
    <property type="match status" value="1"/>
</dbReference>
<dbReference type="Pfam" id="PF01628">
    <property type="entry name" value="HrcA"/>
    <property type="match status" value="1"/>
</dbReference>
<dbReference type="PIRSF" id="PIRSF005485">
    <property type="entry name" value="HrcA"/>
    <property type="match status" value="1"/>
</dbReference>
<dbReference type="SUPFAM" id="SSF55781">
    <property type="entry name" value="GAF domain-like"/>
    <property type="match status" value="1"/>
</dbReference>
<dbReference type="SUPFAM" id="SSF46785">
    <property type="entry name" value="Winged helix' DNA-binding domain"/>
    <property type="match status" value="1"/>
</dbReference>
<name>HRCA_CHLPB</name>
<protein>
    <recommendedName>
        <fullName evidence="1">Heat-inducible transcription repressor HrcA</fullName>
    </recommendedName>
</protein>
<reference key="1">
    <citation type="submission" date="2008-06" db="EMBL/GenBank/DDBJ databases">
        <title>Complete sequence of Chlorobium phaeobacteroides BS1.</title>
        <authorList>
            <consortium name="US DOE Joint Genome Institute"/>
            <person name="Lucas S."/>
            <person name="Copeland A."/>
            <person name="Lapidus A."/>
            <person name="Glavina del Rio T."/>
            <person name="Dalin E."/>
            <person name="Tice H."/>
            <person name="Bruce D."/>
            <person name="Goodwin L."/>
            <person name="Pitluck S."/>
            <person name="Schmutz J."/>
            <person name="Larimer F."/>
            <person name="Land M."/>
            <person name="Hauser L."/>
            <person name="Kyrpides N."/>
            <person name="Ovchinnikova G."/>
            <person name="Li T."/>
            <person name="Liu Z."/>
            <person name="Zhao F."/>
            <person name="Overmann J."/>
            <person name="Bryant D.A."/>
            <person name="Richardson P."/>
        </authorList>
    </citation>
    <scope>NUCLEOTIDE SEQUENCE [LARGE SCALE GENOMIC DNA]</scope>
    <source>
        <strain>BS1</strain>
    </source>
</reference>
<organism>
    <name type="scientific">Chlorobium phaeobacteroides (strain BS1)</name>
    <dbReference type="NCBI Taxonomy" id="331678"/>
    <lineage>
        <taxon>Bacteria</taxon>
        <taxon>Pseudomonadati</taxon>
        <taxon>Chlorobiota</taxon>
        <taxon>Chlorobiia</taxon>
        <taxon>Chlorobiales</taxon>
        <taxon>Chlorobiaceae</taxon>
        <taxon>Chlorobium/Pelodictyon group</taxon>
        <taxon>Chlorobium</taxon>
    </lineage>
</organism>
<sequence>MMFHDLSERERQVLSIIIQAYVMNASPVGSRYIARNYNLGLSDATIRNVMADLEDAGYISQPHTSAGRVPTDKGYRYYVDLIMRVQGIDDEEINRIDRNFRLLKYDPKDSADILQAAAKVLGSISQQLSVVISPRLSNALFERLDLVVLSSSRIMVVLSIQSLFVRTIVMELSLEVSRQQIDNVIDLLNQRLSGLTLREIRNSISRRLADCDKDRELLNMIVGSADNLFDDTPVLERLYIAGAEHIVNQPEFDQPQKVRDLVCMIEDKNRMVELLEKEGRVKPVTSSGMDVSISIGRENSATTAEDFTVVTTPYYVGNTIGRLGVLGPKRMDYERVVRLVNYMADRLSHSLS</sequence>
<feature type="chain" id="PRO_1000092803" description="Heat-inducible transcription repressor HrcA">
    <location>
        <begin position="1"/>
        <end position="352"/>
    </location>
</feature>
<evidence type="ECO:0000255" key="1">
    <source>
        <dbReference type="HAMAP-Rule" id="MF_00081"/>
    </source>
</evidence>
<comment type="function">
    <text evidence="1">Negative regulator of class I heat shock genes (grpE-dnaK-dnaJ and groELS operons). Prevents heat-shock induction of these operons.</text>
</comment>
<comment type="similarity">
    <text evidence="1">Belongs to the HrcA family.</text>
</comment>
<accession>B3EPC5</accession>
<gene>
    <name evidence="1" type="primary">hrcA</name>
    <name type="ordered locus">Cphamn1_0852</name>
</gene>